<accession>B2KAU3</accession>
<proteinExistence type="inferred from homology"/>
<dbReference type="EMBL" id="CP001055">
    <property type="protein sequence ID" value="ACC97639.1"/>
    <property type="molecule type" value="Genomic_DNA"/>
</dbReference>
<dbReference type="RefSeq" id="WP_012414254.1">
    <property type="nucleotide sequence ID" value="NC_010644.1"/>
</dbReference>
<dbReference type="SMR" id="B2KAU3"/>
<dbReference type="STRING" id="445932.Emin_0072"/>
<dbReference type="KEGG" id="emi:Emin_0072"/>
<dbReference type="HOGENOM" id="CLU_064548_7_0_0"/>
<dbReference type="OrthoDB" id="9801582at2"/>
<dbReference type="Proteomes" id="UP000001029">
    <property type="component" value="Chromosome"/>
</dbReference>
<dbReference type="GO" id="GO:1990904">
    <property type="term" value="C:ribonucleoprotein complex"/>
    <property type="evidence" value="ECO:0007669"/>
    <property type="project" value="UniProtKB-KW"/>
</dbReference>
<dbReference type="GO" id="GO:0005840">
    <property type="term" value="C:ribosome"/>
    <property type="evidence" value="ECO:0007669"/>
    <property type="project" value="UniProtKB-KW"/>
</dbReference>
<dbReference type="GO" id="GO:0003735">
    <property type="term" value="F:structural constituent of ribosome"/>
    <property type="evidence" value="ECO:0007669"/>
    <property type="project" value="InterPro"/>
</dbReference>
<dbReference type="GO" id="GO:0006412">
    <property type="term" value="P:translation"/>
    <property type="evidence" value="ECO:0007669"/>
    <property type="project" value="UniProtKB-UniRule"/>
</dbReference>
<dbReference type="Gene3D" id="2.30.170.40">
    <property type="entry name" value="Ribosomal protein L28/L24"/>
    <property type="match status" value="1"/>
</dbReference>
<dbReference type="HAMAP" id="MF_00373">
    <property type="entry name" value="Ribosomal_bL28"/>
    <property type="match status" value="1"/>
</dbReference>
<dbReference type="InterPro" id="IPR050096">
    <property type="entry name" value="Bacterial_rp_bL28"/>
</dbReference>
<dbReference type="InterPro" id="IPR026569">
    <property type="entry name" value="Ribosomal_bL28"/>
</dbReference>
<dbReference type="InterPro" id="IPR034704">
    <property type="entry name" value="Ribosomal_bL28/bL31-like_sf"/>
</dbReference>
<dbReference type="InterPro" id="IPR001383">
    <property type="entry name" value="Ribosomal_bL28_bact-type"/>
</dbReference>
<dbReference type="InterPro" id="IPR037147">
    <property type="entry name" value="Ribosomal_bL28_sf"/>
</dbReference>
<dbReference type="NCBIfam" id="TIGR00009">
    <property type="entry name" value="L28"/>
    <property type="match status" value="1"/>
</dbReference>
<dbReference type="PANTHER" id="PTHR39080">
    <property type="entry name" value="50S RIBOSOMAL PROTEIN L28"/>
    <property type="match status" value="1"/>
</dbReference>
<dbReference type="PANTHER" id="PTHR39080:SF1">
    <property type="entry name" value="LARGE RIBOSOMAL SUBUNIT PROTEIN BL28A"/>
    <property type="match status" value="1"/>
</dbReference>
<dbReference type="Pfam" id="PF00830">
    <property type="entry name" value="Ribosomal_L28"/>
    <property type="match status" value="1"/>
</dbReference>
<dbReference type="SUPFAM" id="SSF143800">
    <property type="entry name" value="L28p-like"/>
    <property type="match status" value="1"/>
</dbReference>
<gene>
    <name evidence="1" type="primary">rpmB</name>
    <name type="ordered locus">Emin_0072</name>
</gene>
<comment type="similarity">
    <text evidence="1">Belongs to the bacterial ribosomal protein bL28 family.</text>
</comment>
<reference key="1">
    <citation type="journal article" date="2009" name="Appl. Environ. Microbiol.">
        <title>Genomic analysis of 'Elusimicrobium minutum,' the first cultivated representative of the phylum 'Elusimicrobia' (formerly termite group 1).</title>
        <authorList>
            <person name="Herlemann D.P.R."/>
            <person name="Geissinger O."/>
            <person name="Ikeda-Ohtsubo W."/>
            <person name="Kunin V."/>
            <person name="Sun H."/>
            <person name="Lapidus A."/>
            <person name="Hugenholtz P."/>
            <person name="Brune A."/>
        </authorList>
    </citation>
    <scope>NUCLEOTIDE SEQUENCE [LARGE SCALE GENOMIC DNA]</scope>
    <source>
        <strain>Pei191</strain>
    </source>
</reference>
<protein>
    <recommendedName>
        <fullName evidence="1">Large ribosomal subunit protein bL28</fullName>
    </recommendedName>
    <alternativeName>
        <fullName evidence="2">50S ribosomal protein L28</fullName>
    </alternativeName>
</protein>
<name>RL28_ELUMP</name>
<organism>
    <name type="scientific">Elusimicrobium minutum (strain Pei191)</name>
    <dbReference type="NCBI Taxonomy" id="445932"/>
    <lineage>
        <taxon>Bacteria</taxon>
        <taxon>Pseudomonadati</taxon>
        <taxon>Elusimicrobiota</taxon>
        <taxon>Elusimicrobia</taxon>
        <taxon>Elusimicrobiales</taxon>
        <taxon>Elusimicrobiaceae</taxon>
        <taxon>Elusimicrobium</taxon>
    </lineage>
</organism>
<feature type="chain" id="PRO_1000121633" description="Large ribosomal subunit protein bL28">
    <location>
        <begin position="1"/>
        <end position="64"/>
    </location>
</feature>
<sequence>MSYKCQLCGKGSVTGGSYSHSHRNTKRTFRPNLQKQKVVLEGKTQTAYVCTKCIKSGFTTKPVK</sequence>
<evidence type="ECO:0000255" key="1">
    <source>
        <dbReference type="HAMAP-Rule" id="MF_00373"/>
    </source>
</evidence>
<evidence type="ECO:0000305" key="2"/>
<keyword id="KW-1185">Reference proteome</keyword>
<keyword id="KW-0687">Ribonucleoprotein</keyword>
<keyword id="KW-0689">Ribosomal protein</keyword>